<reference key="1">
    <citation type="journal article" date="2007" name="J. Bacteriol.">
        <title>Whole-genome analysis of the methyl tert-butyl ether-degrading beta-proteobacterium Methylibium petroleiphilum PM1.</title>
        <authorList>
            <person name="Kane S.R."/>
            <person name="Chakicherla A.Y."/>
            <person name="Chain P.S.G."/>
            <person name="Schmidt R."/>
            <person name="Shin M.W."/>
            <person name="Legler T.C."/>
            <person name="Scow K.M."/>
            <person name="Larimer F.W."/>
            <person name="Lucas S.M."/>
            <person name="Richardson P.M."/>
            <person name="Hristova K.R."/>
        </authorList>
    </citation>
    <scope>NUCLEOTIDE SEQUENCE [LARGE SCALE GENOMIC DNA]</scope>
    <source>
        <strain>ATCC BAA-1232 / LMG 22953 / PM1</strain>
    </source>
</reference>
<accession>A2SJL1</accession>
<protein>
    <recommendedName>
        <fullName evidence="1">Phosphatidylserine decarboxylase proenzyme</fullName>
        <ecNumber evidence="1">4.1.1.65</ecNumber>
    </recommendedName>
    <component>
        <recommendedName>
            <fullName evidence="1">Phosphatidylserine decarboxylase alpha chain</fullName>
        </recommendedName>
    </component>
    <component>
        <recommendedName>
            <fullName evidence="1">Phosphatidylserine decarboxylase beta chain</fullName>
        </recommendedName>
    </component>
</protein>
<sequence>MSERLPVLLQYLVPQRALTVFAGFVASGRWGGITTAIIRRFVRKYRVDMSEAAEPDIARYTRFNDFFTRALRPGARPLASAELVCPVDGAISQFGAIERDQIFQAKGHHYSTRALVGGDAELAARFQDGQFATLYLSPRDYHRIHMPCDGRLLRMIHVPGDLFSVNPVTARGVPGLFARNERVVCEFDGPLGPFVLVLVGATIVGSMATVWHGQVNPPRSGRLREWRYADRELRLRQGEEMGRFLLGSTVVALFPQGSVRFDPGWEPGRAVRLGEAMAFAPLL</sequence>
<evidence type="ECO:0000255" key="1">
    <source>
        <dbReference type="HAMAP-Rule" id="MF_00662"/>
    </source>
</evidence>
<feature type="chain" id="PRO_1000026560" description="Phosphatidylserine decarboxylase beta chain" evidence="1">
    <location>
        <begin position="1"/>
        <end position="247"/>
    </location>
</feature>
<feature type="chain" id="PRO_1000026561" description="Phosphatidylserine decarboxylase alpha chain" evidence="1">
    <location>
        <begin position="248"/>
        <end position="283"/>
    </location>
</feature>
<feature type="active site" description="Charge relay system; for autoendoproteolytic cleavage activity" evidence="1">
    <location>
        <position position="88"/>
    </location>
</feature>
<feature type="active site" description="Charge relay system; for autoendoproteolytic cleavage activity" evidence="1">
    <location>
        <position position="145"/>
    </location>
</feature>
<feature type="active site" description="Charge relay system; for autoendoproteolytic cleavage activity" evidence="1">
    <location>
        <position position="248"/>
    </location>
</feature>
<feature type="active site" description="Schiff-base intermediate with substrate; via pyruvic acid; for decarboxylase activity" evidence="1">
    <location>
        <position position="248"/>
    </location>
</feature>
<feature type="site" description="Cleavage (non-hydrolytic); by autocatalysis" evidence="1">
    <location>
        <begin position="247"/>
        <end position="248"/>
    </location>
</feature>
<feature type="modified residue" description="Pyruvic acid (Ser); by autocatalysis" evidence="1">
    <location>
        <position position="248"/>
    </location>
</feature>
<comment type="function">
    <text evidence="1">Catalyzes the formation of phosphatidylethanolamine (PtdEtn) from phosphatidylserine (PtdSer).</text>
</comment>
<comment type="catalytic activity">
    <reaction evidence="1">
        <text>a 1,2-diacyl-sn-glycero-3-phospho-L-serine + H(+) = a 1,2-diacyl-sn-glycero-3-phosphoethanolamine + CO2</text>
        <dbReference type="Rhea" id="RHEA:20828"/>
        <dbReference type="ChEBI" id="CHEBI:15378"/>
        <dbReference type="ChEBI" id="CHEBI:16526"/>
        <dbReference type="ChEBI" id="CHEBI:57262"/>
        <dbReference type="ChEBI" id="CHEBI:64612"/>
        <dbReference type="EC" id="4.1.1.65"/>
    </reaction>
</comment>
<comment type="cofactor">
    <cofactor evidence="1">
        <name>pyruvate</name>
        <dbReference type="ChEBI" id="CHEBI:15361"/>
    </cofactor>
    <text evidence="1">Binds 1 pyruvoyl group covalently per subunit.</text>
</comment>
<comment type="pathway">
    <text evidence="1">Phospholipid metabolism; phosphatidylethanolamine biosynthesis; phosphatidylethanolamine from CDP-diacylglycerol: step 2/2.</text>
</comment>
<comment type="subunit">
    <text evidence="1">Heterodimer of a large membrane-associated beta subunit and a small pyruvoyl-containing alpha subunit.</text>
</comment>
<comment type="subcellular location">
    <subcellularLocation>
        <location evidence="1">Cell membrane</location>
        <topology evidence="1">Peripheral membrane protein</topology>
    </subcellularLocation>
</comment>
<comment type="PTM">
    <text evidence="1">Is synthesized initially as an inactive proenzyme. Formation of the active enzyme involves a self-maturation process in which the active site pyruvoyl group is generated from an internal serine residue via an autocatalytic post-translational modification. Two non-identical subunits are generated from the proenzyme in this reaction, and the pyruvate is formed at the N-terminus of the alpha chain, which is derived from the carboxyl end of the proenzyme. The autoendoproteolytic cleavage occurs by a canonical serine protease mechanism, in which the side chain hydroxyl group of the serine supplies its oxygen atom to form the C-terminus of the beta chain, while the remainder of the serine residue undergoes an oxidative deamination to produce ammonia and the pyruvoyl prosthetic group on the alpha chain. During this reaction, the Ser that is part of the protease active site of the proenzyme becomes the pyruvoyl prosthetic group, which constitutes an essential element of the active site of the mature decarboxylase.</text>
</comment>
<comment type="similarity">
    <text evidence="1">Belongs to the phosphatidylserine decarboxylase family. PSD-B subfamily. Prokaryotic type I sub-subfamily.</text>
</comment>
<name>PSD_METPP</name>
<gene>
    <name evidence="1" type="primary">psd</name>
    <name type="ordered locus">Mpe_A2796</name>
</gene>
<keyword id="KW-1003">Cell membrane</keyword>
<keyword id="KW-0210">Decarboxylase</keyword>
<keyword id="KW-0444">Lipid biosynthesis</keyword>
<keyword id="KW-0443">Lipid metabolism</keyword>
<keyword id="KW-0456">Lyase</keyword>
<keyword id="KW-0472">Membrane</keyword>
<keyword id="KW-0594">Phospholipid biosynthesis</keyword>
<keyword id="KW-1208">Phospholipid metabolism</keyword>
<keyword id="KW-0670">Pyruvate</keyword>
<keyword id="KW-1185">Reference proteome</keyword>
<keyword id="KW-0865">Zymogen</keyword>
<proteinExistence type="inferred from homology"/>
<organism>
    <name type="scientific">Methylibium petroleiphilum (strain ATCC BAA-1232 / LMG 22953 / PM1)</name>
    <dbReference type="NCBI Taxonomy" id="420662"/>
    <lineage>
        <taxon>Bacteria</taxon>
        <taxon>Pseudomonadati</taxon>
        <taxon>Pseudomonadota</taxon>
        <taxon>Betaproteobacteria</taxon>
        <taxon>Burkholderiales</taxon>
        <taxon>Sphaerotilaceae</taxon>
        <taxon>Methylibium</taxon>
    </lineage>
</organism>
<dbReference type="EC" id="4.1.1.65" evidence="1"/>
<dbReference type="EMBL" id="CP000555">
    <property type="protein sequence ID" value="ABM95750.1"/>
    <property type="molecule type" value="Genomic_DNA"/>
</dbReference>
<dbReference type="RefSeq" id="WP_011830379.1">
    <property type="nucleotide sequence ID" value="NC_008825.1"/>
</dbReference>
<dbReference type="SMR" id="A2SJL1"/>
<dbReference type="STRING" id="420662.Mpe_A2796"/>
<dbReference type="KEGG" id="mpt:Mpe_A2796"/>
<dbReference type="eggNOG" id="COG0688">
    <property type="taxonomic scope" value="Bacteria"/>
</dbReference>
<dbReference type="HOGENOM" id="CLU_029061_4_1_4"/>
<dbReference type="UniPathway" id="UPA00558">
    <property type="reaction ID" value="UER00616"/>
</dbReference>
<dbReference type="Proteomes" id="UP000000366">
    <property type="component" value="Chromosome"/>
</dbReference>
<dbReference type="GO" id="GO:0005886">
    <property type="term" value="C:plasma membrane"/>
    <property type="evidence" value="ECO:0007669"/>
    <property type="project" value="UniProtKB-SubCell"/>
</dbReference>
<dbReference type="GO" id="GO:0004609">
    <property type="term" value="F:phosphatidylserine decarboxylase activity"/>
    <property type="evidence" value="ECO:0007669"/>
    <property type="project" value="UniProtKB-UniRule"/>
</dbReference>
<dbReference type="GO" id="GO:0006646">
    <property type="term" value="P:phosphatidylethanolamine biosynthetic process"/>
    <property type="evidence" value="ECO:0007669"/>
    <property type="project" value="UniProtKB-UniRule"/>
</dbReference>
<dbReference type="HAMAP" id="MF_00662">
    <property type="entry name" value="PS_decarb_PSD_B_type1"/>
    <property type="match status" value="1"/>
</dbReference>
<dbReference type="InterPro" id="IPR003817">
    <property type="entry name" value="PS_Dcarbxylase"/>
</dbReference>
<dbReference type="InterPro" id="IPR033177">
    <property type="entry name" value="PSD-B"/>
</dbReference>
<dbReference type="InterPro" id="IPR033178">
    <property type="entry name" value="PSD_type1_pro"/>
</dbReference>
<dbReference type="NCBIfam" id="TIGR00163">
    <property type="entry name" value="PS_decarb"/>
    <property type="match status" value="1"/>
</dbReference>
<dbReference type="PANTHER" id="PTHR10067">
    <property type="entry name" value="PHOSPHATIDYLSERINE DECARBOXYLASE"/>
    <property type="match status" value="1"/>
</dbReference>
<dbReference type="PANTHER" id="PTHR10067:SF6">
    <property type="entry name" value="PHOSPHATIDYLSERINE DECARBOXYLASE PROENZYME, MITOCHONDRIAL"/>
    <property type="match status" value="1"/>
</dbReference>
<dbReference type="Pfam" id="PF02666">
    <property type="entry name" value="PS_Dcarbxylase"/>
    <property type="match status" value="1"/>
</dbReference>